<dbReference type="EC" id="3.1.26.-"/>
<dbReference type="EMBL" id="AB024036">
    <property type="protein sequence ID" value="BAB02825.1"/>
    <property type="molecule type" value="Genomic_DNA"/>
</dbReference>
<dbReference type="EMBL" id="CP002686">
    <property type="protein sequence ID" value="AEE76376.1"/>
    <property type="molecule type" value="Genomic_DNA"/>
</dbReference>
<dbReference type="EMBL" id="AY042815">
    <property type="protein sequence ID" value="AAK68755.2"/>
    <property type="molecule type" value="mRNA"/>
</dbReference>
<dbReference type="EMBL" id="AY081681">
    <property type="protein sequence ID" value="AAM10243.1"/>
    <property type="molecule type" value="mRNA"/>
</dbReference>
<dbReference type="RefSeq" id="NP_566661.1">
    <property type="nucleotide sequence ID" value="NM_112933.3"/>
</dbReference>
<dbReference type="SMR" id="Q9LTQ0"/>
<dbReference type="BioGRID" id="6919">
    <property type="interactions" value="8"/>
</dbReference>
<dbReference type="FunCoup" id="Q9LTQ0">
    <property type="interactions" value="3"/>
</dbReference>
<dbReference type="IntAct" id="Q9LTQ0">
    <property type="interactions" value="7"/>
</dbReference>
<dbReference type="STRING" id="3702.Q9LTQ0"/>
<dbReference type="PaxDb" id="3702-AT3G20420.1"/>
<dbReference type="ProteomicsDB" id="228048"/>
<dbReference type="EnsemblPlants" id="AT3G20420.1">
    <property type="protein sequence ID" value="AT3G20420.1"/>
    <property type="gene ID" value="AT3G20420"/>
</dbReference>
<dbReference type="GeneID" id="821587"/>
<dbReference type="Gramene" id="AT3G20420.1">
    <property type="protein sequence ID" value="AT3G20420.1"/>
    <property type="gene ID" value="AT3G20420"/>
</dbReference>
<dbReference type="KEGG" id="ath:AT3G20420"/>
<dbReference type="Araport" id="AT3G20420"/>
<dbReference type="TAIR" id="AT3G20420">
    <property type="gene designation" value="RTL2"/>
</dbReference>
<dbReference type="eggNOG" id="KOG0701">
    <property type="taxonomic scope" value="Eukaryota"/>
</dbReference>
<dbReference type="HOGENOM" id="CLU_000907_5_0_1"/>
<dbReference type="InParanoid" id="Q9LTQ0"/>
<dbReference type="OMA" id="KLWMIFR"/>
<dbReference type="PhylomeDB" id="Q9LTQ0"/>
<dbReference type="PRO" id="PR:Q9LTQ0"/>
<dbReference type="Proteomes" id="UP000006548">
    <property type="component" value="Chromosome 3"/>
</dbReference>
<dbReference type="ExpressionAtlas" id="Q9LTQ0">
    <property type="expression patterns" value="baseline and differential"/>
</dbReference>
<dbReference type="GO" id="GO:0005737">
    <property type="term" value="C:cytoplasm"/>
    <property type="evidence" value="ECO:0000314"/>
    <property type="project" value="TAIR"/>
</dbReference>
<dbReference type="GO" id="GO:0005634">
    <property type="term" value="C:nucleus"/>
    <property type="evidence" value="ECO:0000314"/>
    <property type="project" value="TAIR"/>
</dbReference>
<dbReference type="GO" id="GO:0046872">
    <property type="term" value="F:metal ion binding"/>
    <property type="evidence" value="ECO:0007669"/>
    <property type="project" value="UniProtKB-KW"/>
</dbReference>
<dbReference type="GO" id="GO:0004525">
    <property type="term" value="F:ribonuclease III activity"/>
    <property type="evidence" value="ECO:0000315"/>
    <property type="project" value="TAIR"/>
</dbReference>
<dbReference type="GO" id="GO:0003723">
    <property type="term" value="F:RNA binding"/>
    <property type="evidence" value="ECO:0007669"/>
    <property type="project" value="UniProtKB-KW"/>
</dbReference>
<dbReference type="GO" id="GO:0006364">
    <property type="term" value="P:rRNA processing"/>
    <property type="evidence" value="ECO:0007669"/>
    <property type="project" value="UniProtKB-KW"/>
</dbReference>
<dbReference type="CDD" id="cd00048">
    <property type="entry name" value="DSRM_SF"/>
    <property type="match status" value="1"/>
</dbReference>
<dbReference type="CDD" id="cd00593">
    <property type="entry name" value="RIBOc"/>
    <property type="match status" value="1"/>
</dbReference>
<dbReference type="FunFam" id="1.10.1520.10:FF:000004">
    <property type="entry name" value="Endoribonuclease dicer-like 1"/>
    <property type="match status" value="1"/>
</dbReference>
<dbReference type="FunFam" id="3.30.160.20:FF:000112">
    <property type="entry name" value="Ribonuclease 3-like protein 3"/>
    <property type="match status" value="1"/>
</dbReference>
<dbReference type="Gene3D" id="3.30.160.20">
    <property type="match status" value="2"/>
</dbReference>
<dbReference type="Gene3D" id="1.10.1520.10">
    <property type="entry name" value="Ribonuclease III domain"/>
    <property type="match status" value="1"/>
</dbReference>
<dbReference type="InterPro" id="IPR014720">
    <property type="entry name" value="dsRBD_dom"/>
</dbReference>
<dbReference type="InterPro" id="IPR000999">
    <property type="entry name" value="RNase_III_dom"/>
</dbReference>
<dbReference type="InterPro" id="IPR036389">
    <property type="entry name" value="RNase_III_sf"/>
</dbReference>
<dbReference type="PANTHER" id="PTHR14950">
    <property type="entry name" value="DICER-RELATED"/>
    <property type="match status" value="1"/>
</dbReference>
<dbReference type="PANTHER" id="PTHR14950:SF49">
    <property type="entry name" value="RIBONUCLEASE 3-LIKE PROTEIN 2-RELATED"/>
    <property type="match status" value="1"/>
</dbReference>
<dbReference type="Pfam" id="PF14709">
    <property type="entry name" value="DND1_DSRM"/>
    <property type="match status" value="1"/>
</dbReference>
<dbReference type="Pfam" id="PF00035">
    <property type="entry name" value="dsrm"/>
    <property type="match status" value="1"/>
</dbReference>
<dbReference type="Pfam" id="PF00636">
    <property type="entry name" value="Ribonuclease_3"/>
    <property type="match status" value="1"/>
</dbReference>
<dbReference type="SMART" id="SM00358">
    <property type="entry name" value="DSRM"/>
    <property type="match status" value="2"/>
</dbReference>
<dbReference type="SMART" id="SM00535">
    <property type="entry name" value="RIBOc"/>
    <property type="match status" value="1"/>
</dbReference>
<dbReference type="SUPFAM" id="SSF54768">
    <property type="entry name" value="dsRNA-binding domain-like"/>
    <property type="match status" value="2"/>
</dbReference>
<dbReference type="SUPFAM" id="SSF69065">
    <property type="entry name" value="RNase III domain-like"/>
    <property type="match status" value="1"/>
</dbReference>
<dbReference type="PROSITE" id="PS50137">
    <property type="entry name" value="DS_RBD"/>
    <property type="match status" value="1"/>
</dbReference>
<dbReference type="PROSITE" id="PS50142">
    <property type="entry name" value="RNASE_3_2"/>
    <property type="match status" value="1"/>
</dbReference>
<evidence type="ECO:0000250" key="1"/>
<evidence type="ECO:0000255" key="2"/>
<evidence type="ECO:0000255" key="3">
    <source>
        <dbReference type="PROSITE-ProRule" id="PRU00177"/>
    </source>
</evidence>
<evidence type="ECO:0000255" key="4">
    <source>
        <dbReference type="PROSITE-ProRule" id="PRU00266"/>
    </source>
</evidence>
<evidence type="ECO:0000269" key="5">
    <source>
    </source>
</evidence>
<evidence type="ECO:0000269" key="6">
    <source>
    </source>
</evidence>
<evidence type="ECO:0000305" key="7"/>
<evidence type="ECO:0000305" key="8">
    <source>
    </source>
</evidence>
<keyword id="KW-0963">Cytoplasm</keyword>
<keyword id="KW-1015">Disulfide bond</keyword>
<keyword id="KW-0255">Endonuclease</keyword>
<keyword id="KW-0378">Hydrolase</keyword>
<keyword id="KW-0460">Magnesium</keyword>
<keyword id="KW-0464">Manganese</keyword>
<keyword id="KW-0479">Metal-binding</keyword>
<keyword id="KW-0540">Nuclease</keyword>
<keyword id="KW-0539">Nucleus</keyword>
<keyword id="KW-1185">Reference proteome</keyword>
<keyword id="KW-0677">Repeat</keyword>
<keyword id="KW-0694">RNA-binding</keyword>
<keyword id="KW-0698">rRNA processing</keyword>
<comment type="function">
    <text evidence="5 6">Ribonuclease that cleaves double-stranded RNA (dsRNA). Required for 3'-external transcribed spacer (ETS) cleavage of the pre-rRNA precursors. May promote the production of 21 nucleotide small interfering RNA (siRNA) during post-transcriptional gene silencing (PTGS).</text>
</comment>
<comment type="cofactor">
    <cofactor evidence="1">
        <name>Mg(2+)</name>
        <dbReference type="ChEBI" id="CHEBI:18420"/>
    </cofactor>
    <cofactor evidence="1">
        <name>Mn(2+)</name>
        <dbReference type="ChEBI" id="CHEBI:29035"/>
    </cofactor>
    <text evidence="1">Binds Mg(2+) or Mn(2+).</text>
</comment>
<comment type="subunit">
    <text evidence="8">Homodimer; disulfide-linked.</text>
</comment>
<comment type="subcellular location">
    <subcellularLocation>
        <location evidence="5">Nucleus</location>
    </subcellularLocation>
    <subcellularLocation>
        <location evidence="5">Cytoplasm</location>
    </subcellularLocation>
</comment>
<comment type="tissue specificity">
    <text evidence="5">Expressed in seeds, leaves and flower buds.</text>
</comment>
<comment type="developmental stage">
    <text evidence="5">Expressed in siliques from 0 to 10 days after fertilization (DAF). Levels decrease at 13 DAF and disappear at 16 DAF. Expressed early in seed germination from 6 hours to 48 hours after seed imbibition.</text>
</comment>
<organism>
    <name type="scientific">Arabidopsis thaliana</name>
    <name type="common">Mouse-ear cress</name>
    <dbReference type="NCBI Taxonomy" id="3702"/>
    <lineage>
        <taxon>Eukaryota</taxon>
        <taxon>Viridiplantae</taxon>
        <taxon>Streptophyta</taxon>
        <taxon>Embryophyta</taxon>
        <taxon>Tracheophyta</taxon>
        <taxon>Spermatophyta</taxon>
        <taxon>Magnoliopsida</taxon>
        <taxon>eudicotyledons</taxon>
        <taxon>Gunneridae</taxon>
        <taxon>Pentapetalae</taxon>
        <taxon>rosids</taxon>
        <taxon>malvids</taxon>
        <taxon>Brassicales</taxon>
        <taxon>Brassicaceae</taxon>
        <taxon>Camelineae</taxon>
        <taxon>Arabidopsis</taxon>
    </lineage>
</organism>
<gene>
    <name type="primary">RTL2</name>
    <name type="ordered locus">At3g20420</name>
    <name type="ORF">MQC12.21</name>
</gene>
<sequence length="391" mass="44109">MDHSISPEYNFPAITRCSLSNSLPHRPPSPLPSSADIHRFYNSLSPSAPSVPVSSEMESMEAVEKILNYKFSNKSLLKEAITHTSCTDFPSYERLEFIGDSAIGLAISNYLYLTYPSLEPHDLSLLRAANVSTEKLARVSLNHGLYSFLRRNAPSLDEKVKEFSEAVGKEDDLSVSYGGLVKAPKVLADLFESLAGAVYVDVNFDLQRLWVIFRGLLEPIVTLDDLQKQPQPVSMLFKLCHKHKKRIDIKNWKDGNVSIAVIYLDDELLASGRAENKDIARLIAAKEALRKLSEVFPVEMVIDEDSVEIQLTHAKTKLNEICLKKKWPKPIYSVEEDRSSVQGKRFVCSAKIKITEEKTLYMKGDEQSKIKKAESSSAYHMIRALRKSHYL</sequence>
<accession>Q9LTQ0</accession>
<accession>Q94B67</accession>
<reference key="1">
    <citation type="journal article" date="2000" name="DNA Res.">
        <title>Structural analysis of Arabidopsis thaliana chromosome 3. I. Sequence features of the regions of 4,504,864 bp covered by sixty P1 and TAC clones.</title>
        <authorList>
            <person name="Sato S."/>
            <person name="Nakamura Y."/>
            <person name="Kaneko T."/>
            <person name="Katoh T."/>
            <person name="Asamizu E."/>
            <person name="Tabata S."/>
        </authorList>
    </citation>
    <scope>NUCLEOTIDE SEQUENCE [LARGE SCALE GENOMIC DNA]</scope>
    <source>
        <strain>cv. Columbia</strain>
    </source>
</reference>
<reference key="2">
    <citation type="journal article" date="2017" name="Plant J.">
        <title>Araport11: a complete reannotation of the Arabidopsis thaliana reference genome.</title>
        <authorList>
            <person name="Cheng C.Y."/>
            <person name="Krishnakumar V."/>
            <person name="Chan A.P."/>
            <person name="Thibaud-Nissen F."/>
            <person name="Schobel S."/>
            <person name="Town C.D."/>
        </authorList>
    </citation>
    <scope>GENOME REANNOTATION</scope>
    <source>
        <strain>cv. Columbia</strain>
    </source>
</reference>
<reference key="3">
    <citation type="journal article" date="2003" name="Science">
        <title>Empirical analysis of transcriptional activity in the Arabidopsis genome.</title>
        <authorList>
            <person name="Yamada K."/>
            <person name="Lim J."/>
            <person name="Dale J.M."/>
            <person name="Chen H."/>
            <person name="Shinn P."/>
            <person name="Palm C.J."/>
            <person name="Southwick A.M."/>
            <person name="Wu H.C."/>
            <person name="Kim C.J."/>
            <person name="Nguyen M."/>
            <person name="Pham P.K."/>
            <person name="Cheuk R.F."/>
            <person name="Karlin-Newmann G."/>
            <person name="Liu S.X."/>
            <person name="Lam B."/>
            <person name="Sakano H."/>
            <person name="Wu T."/>
            <person name="Yu G."/>
            <person name="Miranda M."/>
            <person name="Quach H.L."/>
            <person name="Tripp M."/>
            <person name="Chang C.H."/>
            <person name="Lee J.M."/>
            <person name="Toriumi M.J."/>
            <person name="Chan M.M."/>
            <person name="Tang C.C."/>
            <person name="Onodera C.S."/>
            <person name="Deng J.M."/>
            <person name="Akiyama K."/>
            <person name="Ansari Y."/>
            <person name="Arakawa T."/>
            <person name="Banh J."/>
            <person name="Banno F."/>
            <person name="Bowser L."/>
            <person name="Brooks S.Y."/>
            <person name="Carninci P."/>
            <person name="Chao Q."/>
            <person name="Choy N."/>
            <person name="Enju A."/>
            <person name="Goldsmith A.D."/>
            <person name="Gurjal M."/>
            <person name="Hansen N.F."/>
            <person name="Hayashizaki Y."/>
            <person name="Johnson-Hopson C."/>
            <person name="Hsuan V.W."/>
            <person name="Iida K."/>
            <person name="Karnes M."/>
            <person name="Khan S."/>
            <person name="Koesema E."/>
            <person name="Ishida J."/>
            <person name="Jiang P.X."/>
            <person name="Jones T."/>
            <person name="Kawai J."/>
            <person name="Kamiya A."/>
            <person name="Meyers C."/>
            <person name="Nakajima M."/>
            <person name="Narusaka M."/>
            <person name="Seki M."/>
            <person name="Sakurai T."/>
            <person name="Satou M."/>
            <person name="Tamse R."/>
            <person name="Vaysberg M."/>
            <person name="Wallender E.K."/>
            <person name="Wong C."/>
            <person name="Yamamura Y."/>
            <person name="Yuan S."/>
            <person name="Shinozaki K."/>
            <person name="Davis R.W."/>
            <person name="Theologis A."/>
            <person name="Ecker J.R."/>
        </authorList>
    </citation>
    <scope>NUCLEOTIDE SEQUENCE [LARGE SCALE MRNA]</scope>
    <source>
        <strain>cv. Columbia</strain>
    </source>
</reference>
<reference key="4">
    <citation type="journal article" date="2008" name="Nucleic Acids Res.">
        <title>Characterization of a ribonuclease III-like protein required for cleavage of the pre-rRNA in the 3'ETS in Arabidopsis.</title>
        <authorList>
            <person name="Comella P."/>
            <person name="Pontvianne F."/>
            <person name="Lahmy S."/>
            <person name="Vignols F."/>
            <person name="Barbezier N."/>
            <person name="Debures A."/>
            <person name="Jobet E."/>
            <person name="Brugidou E."/>
            <person name="Echeverria M."/>
            <person name="Saez-Vasquez J."/>
        </authorList>
    </citation>
    <scope>FUNCTION</scope>
    <scope>SUBUNIT</scope>
    <scope>SUBCELLULAR LOCATION</scope>
    <scope>DEVELOPMENTAL STAGE</scope>
    <scope>TISSUE SPECIFICITY</scope>
</reference>
<reference key="5">
    <citation type="journal article" date="2011" name="J. Plant Res.">
        <title>An Arabidopsis RNase III-like protein, AtRTL2, cleaves double-stranded RNA in vitro.</title>
        <authorList>
            <person name="Kiyota E."/>
            <person name="Okada R."/>
            <person name="Kondo N."/>
            <person name="Hiraguri A."/>
            <person name="Moriyama H."/>
            <person name="Fukuhara T."/>
        </authorList>
    </citation>
    <scope>FUNCTION</scope>
    <scope>MUTAGENESIS OF ASP-100</scope>
</reference>
<name>RTL2_ARATH</name>
<feature type="chain" id="PRO_0000404663" description="Ribonuclease 3-like protein 2">
    <location>
        <begin position="1"/>
        <end position="391"/>
    </location>
</feature>
<feature type="domain" description="RNase III" evidence="3">
    <location>
        <begin position="60"/>
        <end position="203"/>
    </location>
</feature>
<feature type="domain" description="DRBM 1" evidence="4">
    <location>
        <begin position="218"/>
        <end position="294"/>
    </location>
</feature>
<feature type="domain" description="DRBM 2" evidence="4">
    <location>
        <begin position="313"/>
        <end position="387"/>
    </location>
</feature>
<feature type="short sequence motif" description="Nuclear export signal" evidence="2">
    <location>
        <begin position="7"/>
        <end position="26"/>
    </location>
</feature>
<feature type="short sequence motif" description="Bipartite nuclear localization" evidence="2">
    <location>
        <begin position="371"/>
        <end position="387"/>
    </location>
</feature>
<feature type="binding site" evidence="1">
    <location>
        <position position="96"/>
    </location>
    <ligand>
        <name>Mg(2+)</name>
        <dbReference type="ChEBI" id="CHEBI:18420"/>
    </ligand>
</feature>
<feature type="binding site" evidence="1">
    <location>
        <position position="189"/>
    </location>
    <ligand>
        <name>Mg(2+)</name>
        <dbReference type="ChEBI" id="CHEBI:18420"/>
    </ligand>
</feature>
<feature type="binding site" evidence="1">
    <location>
        <position position="192"/>
    </location>
    <ligand>
        <name>Mg(2+)</name>
        <dbReference type="ChEBI" id="CHEBI:18420"/>
    </ligand>
</feature>
<feature type="site" description="Important for activity" evidence="1">
    <location>
        <position position="185"/>
    </location>
</feature>
<feature type="disulfide bond" evidence="2">
    <location>
        <begin position="240"/>
        <end position="322"/>
    </location>
</feature>
<feature type="mutagenesis site" description="Unable to cleave dsRNA." evidence="6">
    <original>D</original>
    <variation>A</variation>
    <location>
        <position position="100"/>
    </location>
</feature>
<feature type="sequence conflict" description="In Ref. 3; AAK68755/AAM10243." evidence="7" ref="3">
    <original>I</original>
    <variation>V</variation>
    <location>
        <position position="81"/>
    </location>
</feature>
<protein>
    <recommendedName>
        <fullName>Ribonuclease 3-like protein 2</fullName>
        <ecNumber>3.1.26.-</ecNumber>
    </recommendedName>
    <alternativeName>
        <fullName>Ribonuclease III-like protein 2</fullName>
        <shortName>RNase III-like protein 2</shortName>
    </alternativeName>
    <alternativeName>
        <fullName>Ribonuclease three-like protein 2</fullName>
    </alternativeName>
</protein>
<proteinExistence type="evidence at protein level"/>